<accession>A1KJ59</accession>
<gene>
    <name evidence="1" type="primary">rpmI</name>
    <name type="ordered locus">BCG_1681</name>
</gene>
<sequence length="64" mass="7220">MPKAKTHSGASKRFRRTGTGKIVRQKANRRHLLEHKPSTRTRRLDGRTVVAANDTKRVTSLLNG</sequence>
<comment type="similarity">
    <text evidence="1">Belongs to the bacterial ribosomal protein bL35 family.</text>
</comment>
<feature type="chain" id="PRO_1000050718" description="Large ribosomal subunit protein bL35">
    <location>
        <begin position="1"/>
        <end position="64"/>
    </location>
</feature>
<feature type="region of interest" description="Disordered" evidence="2">
    <location>
        <begin position="1"/>
        <end position="22"/>
    </location>
</feature>
<keyword id="KW-0687">Ribonucleoprotein</keyword>
<keyword id="KW-0689">Ribosomal protein</keyword>
<protein>
    <recommendedName>
        <fullName evidence="1">Large ribosomal subunit protein bL35</fullName>
    </recommendedName>
    <alternativeName>
        <fullName evidence="3">50S ribosomal protein L35</fullName>
    </alternativeName>
</protein>
<reference key="1">
    <citation type="journal article" date="2007" name="Proc. Natl. Acad. Sci. U.S.A.">
        <title>Genome plasticity of BCG and impact on vaccine efficacy.</title>
        <authorList>
            <person name="Brosch R."/>
            <person name="Gordon S.V."/>
            <person name="Garnier T."/>
            <person name="Eiglmeier K."/>
            <person name="Frigui W."/>
            <person name="Valenti P."/>
            <person name="Dos Santos S."/>
            <person name="Duthoy S."/>
            <person name="Lacroix C."/>
            <person name="Garcia-Pelayo C."/>
            <person name="Inwald J.K."/>
            <person name="Golby P."/>
            <person name="Garcia J.N."/>
            <person name="Hewinson R.G."/>
            <person name="Behr M.A."/>
            <person name="Quail M.A."/>
            <person name="Churcher C."/>
            <person name="Barrell B.G."/>
            <person name="Parkhill J."/>
            <person name="Cole S.T."/>
        </authorList>
    </citation>
    <scope>NUCLEOTIDE SEQUENCE [LARGE SCALE GENOMIC DNA]</scope>
    <source>
        <strain>BCG / Pasteur 1173P2</strain>
    </source>
</reference>
<organism>
    <name type="scientific">Mycobacterium bovis (strain BCG / Pasteur 1173P2)</name>
    <dbReference type="NCBI Taxonomy" id="410289"/>
    <lineage>
        <taxon>Bacteria</taxon>
        <taxon>Bacillati</taxon>
        <taxon>Actinomycetota</taxon>
        <taxon>Actinomycetes</taxon>
        <taxon>Mycobacteriales</taxon>
        <taxon>Mycobacteriaceae</taxon>
        <taxon>Mycobacterium</taxon>
        <taxon>Mycobacterium tuberculosis complex</taxon>
    </lineage>
</organism>
<evidence type="ECO:0000255" key="1">
    <source>
        <dbReference type="HAMAP-Rule" id="MF_00514"/>
    </source>
</evidence>
<evidence type="ECO:0000256" key="2">
    <source>
        <dbReference type="SAM" id="MobiDB-lite"/>
    </source>
</evidence>
<evidence type="ECO:0000305" key="3"/>
<proteinExistence type="inferred from homology"/>
<dbReference type="EMBL" id="AM408590">
    <property type="protein sequence ID" value="CAL71668.1"/>
    <property type="molecule type" value="Genomic_DNA"/>
</dbReference>
<dbReference type="RefSeq" id="WP_003408106.1">
    <property type="nucleotide sequence ID" value="NC_008769.1"/>
</dbReference>
<dbReference type="SMR" id="A1KJ59"/>
<dbReference type="GeneID" id="45425612"/>
<dbReference type="KEGG" id="mbb:BCG_1681"/>
<dbReference type="HOGENOM" id="CLU_169643_4_2_11"/>
<dbReference type="Proteomes" id="UP000001472">
    <property type="component" value="Chromosome"/>
</dbReference>
<dbReference type="GO" id="GO:0022625">
    <property type="term" value="C:cytosolic large ribosomal subunit"/>
    <property type="evidence" value="ECO:0007669"/>
    <property type="project" value="TreeGrafter"/>
</dbReference>
<dbReference type="GO" id="GO:0003735">
    <property type="term" value="F:structural constituent of ribosome"/>
    <property type="evidence" value="ECO:0007669"/>
    <property type="project" value="InterPro"/>
</dbReference>
<dbReference type="GO" id="GO:0006412">
    <property type="term" value="P:translation"/>
    <property type="evidence" value="ECO:0007669"/>
    <property type="project" value="UniProtKB-UniRule"/>
</dbReference>
<dbReference type="FunFam" id="4.10.410.60:FF:000001">
    <property type="entry name" value="50S ribosomal protein L35"/>
    <property type="match status" value="1"/>
</dbReference>
<dbReference type="Gene3D" id="4.10.410.60">
    <property type="match status" value="1"/>
</dbReference>
<dbReference type="HAMAP" id="MF_00514">
    <property type="entry name" value="Ribosomal_bL35"/>
    <property type="match status" value="1"/>
</dbReference>
<dbReference type="InterPro" id="IPR001706">
    <property type="entry name" value="Ribosomal_bL35"/>
</dbReference>
<dbReference type="InterPro" id="IPR021137">
    <property type="entry name" value="Ribosomal_bL35-like"/>
</dbReference>
<dbReference type="InterPro" id="IPR018265">
    <property type="entry name" value="Ribosomal_bL35_CS"/>
</dbReference>
<dbReference type="InterPro" id="IPR037229">
    <property type="entry name" value="Ribosomal_bL35_sf"/>
</dbReference>
<dbReference type="NCBIfam" id="TIGR00001">
    <property type="entry name" value="rpmI_bact"/>
    <property type="match status" value="1"/>
</dbReference>
<dbReference type="PANTHER" id="PTHR33343">
    <property type="entry name" value="54S RIBOSOMAL PROTEIN BL35M"/>
    <property type="match status" value="1"/>
</dbReference>
<dbReference type="PANTHER" id="PTHR33343:SF1">
    <property type="entry name" value="LARGE RIBOSOMAL SUBUNIT PROTEIN BL35M"/>
    <property type="match status" value="1"/>
</dbReference>
<dbReference type="Pfam" id="PF01632">
    <property type="entry name" value="Ribosomal_L35p"/>
    <property type="match status" value="1"/>
</dbReference>
<dbReference type="PRINTS" id="PR00064">
    <property type="entry name" value="RIBOSOMALL35"/>
</dbReference>
<dbReference type="SUPFAM" id="SSF143034">
    <property type="entry name" value="L35p-like"/>
    <property type="match status" value="1"/>
</dbReference>
<dbReference type="PROSITE" id="PS00936">
    <property type="entry name" value="RIBOSOMAL_L35"/>
    <property type="match status" value="1"/>
</dbReference>
<name>RL35_MYCBP</name>